<accession>A1DN29</accession>
<comment type="function">
    <text evidence="4 5">Cytochrome P450 monooxygenase; part of the gene cluster that mediates the biosynthesis of sesterfisheric acid (PubMed:26332841). The bifunctional terpene synthase NfSS converts DMAPP and IPP, and also GGPP, into sesterfisherol (PubMed:26332841, PubMed:29410538). The C-terminal prenyltransferase (PT) domain of NfSS catalyzes formation of GFPP, whereas the N-terminal terpene cyclase (TC) domain catalyzes the cyclization of GFPP to sesterfisherol (PubMed:26332841, PubMed:29410538). The cytochrome P450 monooxygenase NfP450 then catalyzes oxidative modifications of sesterfisherol into sesterfisheric acid (PubMed:26332841).</text>
</comment>
<comment type="catalytic activity">
    <reaction evidence="4">
        <text>sesterfisherol + 3 reduced [NADPH--hemoprotein reductase] + 3 O2 = sesterfisherate + 3 oxidized [NADPH--hemoprotein reductase] + 4 H2O + 4 H(+)</text>
        <dbReference type="Rhea" id="RHEA:78407"/>
        <dbReference type="Rhea" id="RHEA-COMP:11964"/>
        <dbReference type="Rhea" id="RHEA-COMP:11965"/>
        <dbReference type="ChEBI" id="CHEBI:15377"/>
        <dbReference type="ChEBI" id="CHEBI:15378"/>
        <dbReference type="ChEBI" id="CHEBI:15379"/>
        <dbReference type="ChEBI" id="CHEBI:57618"/>
        <dbReference type="ChEBI" id="CHEBI:58210"/>
        <dbReference type="ChEBI" id="CHEBI:138046"/>
        <dbReference type="ChEBI" id="CHEBI:228367"/>
    </reaction>
    <physiologicalReaction direction="left-to-right" evidence="4">
        <dbReference type="Rhea" id="RHEA:78408"/>
    </physiologicalReaction>
</comment>
<comment type="cofactor">
    <cofactor evidence="1">
        <name>heme</name>
        <dbReference type="ChEBI" id="CHEBI:30413"/>
    </cofactor>
</comment>
<comment type="pathway">
    <text evidence="4">Secondary metabolite biosynthesis; terpenoid biosynthesis.</text>
</comment>
<comment type="subcellular location">
    <subcellularLocation>
        <location evidence="2">Membrane</location>
        <topology evidence="2">Single-pass membrane protein</topology>
    </subcellularLocation>
</comment>
<comment type="similarity">
    <text evidence="7">Belongs to the cytochrome P450 family.</text>
</comment>
<comment type="sequence caution" evidence="4">
    <conflict type="erroneous gene model prediction">
        <sequence resource="EMBL-CDS" id="EAW16200"/>
    </conflict>
</comment>
<proteinExistence type="evidence at protein level"/>
<name>NF450_NEOFI</name>
<protein>
    <recommendedName>
        <fullName evidence="6">Sesterfisheric acid synthase</fullName>
        <ecNumber evidence="4">1.-.-.-</ecNumber>
    </recommendedName>
    <alternativeName>
        <fullName evidence="6">Cytochrome P450 monooxygenase NfP450</fullName>
    </alternativeName>
    <alternativeName>
        <fullName evidence="6">Sesterfisheric acid biosynthesis cluster protein NfP450</fullName>
    </alternativeName>
</protein>
<evidence type="ECO:0000250" key="1">
    <source>
        <dbReference type="UniProtKB" id="P04798"/>
    </source>
</evidence>
<evidence type="ECO:0000255" key="2"/>
<evidence type="ECO:0000255" key="3">
    <source>
        <dbReference type="PROSITE-ProRule" id="PRU00498"/>
    </source>
</evidence>
<evidence type="ECO:0000269" key="4">
    <source>
    </source>
</evidence>
<evidence type="ECO:0000269" key="5">
    <source>
    </source>
</evidence>
<evidence type="ECO:0000303" key="6">
    <source>
    </source>
</evidence>
<evidence type="ECO:0000305" key="7"/>
<organism>
    <name type="scientific">Neosartorya fischeri (strain ATCC 1020 / DSM 3700 / CBS 544.65 / FGSC A1164 / JCM 1740 / NRRL 181 / WB 181)</name>
    <name type="common">Aspergillus fischerianus</name>
    <dbReference type="NCBI Taxonomy" id="331117"/>
    <lineage>
        <taxon>Eukaryota</taxon>
        <taxon>Fungi</taxon>
        <taxon>Dikarya</taxon>
        <taxon>Ascomycota</taxon>
        <taxon>Pezizomycotina</taxon>
        <taxon>Eurotiomycetes</taxon>
        <taxon>Eurotiomycetidae</taxon>
        <taxon>Eurotiales</taxon>
        <taxon>Aspergillaceae</taxon>
        <taxon>Aspergillus</taxon>
        <taxon>Aspergillus subgen. Fumigati</taxon>
    </lineage>
</organism>
<gene>
    <name evidence="6" type="primary">NfP450</name>
    <name type="ORF">NFIA_055490</name>
</gene>
<feature type="chain" id="PRO_0000453641" description="Sesterfisheric acid synthase">
    <location>
        <begin position="1"/>
        <end position="547"/>
    </location>
</feature>
<feature type="transmembrane region" description="Helical" evidence="2">
    <location>
        <begin position="19"/>
        <end position="39"/>
    </location>
</feature>
<feature type="binding site" description="axial binding residue" evidence="1">
    <location>
        <position position="490"/>
    </location>
    <ligand>
        <name>heme</name>
        <dbReference type="ChEBI" id="CHEBI:30413"/>
    </ligand>
    <ligandPart>
        <name>Fe</name>
        <dbReference type="ChEBI" id="CHEBI:18248"/>
    </ligandPart>
</feature>
<feature type="glycosylation site" description="N-linked (GlcNAc...) asparagine" evidence="3">
    <location>
        <position position="341"/>
    </location>
</feature>
<feature type="glycosylation site" description="N-linked (GlcNAc...) asparagine" evidence="3">
    <location>
        <position position="404"/>
    </location>
</feature>
<dbReference type="EC" id="1.-.-.-" evidence="4"/>
<dbReference type="EMBL" id="DS027698">
    <property type="protein sequence ID" value="EAW16200.1"/>
    <property type="status" value="ALT_SEQ"/>
    <property type="molecule type" value="Genomic_DNA"/>
</dbReference>
<dbReference type="RefSeq" id="XP_001258097.1">
    <property type="nucleotide sequence ID" value="XM_001258096.1"/>
</dbReference>
<dbReference type="SMR" id="A1DN29"/>
<dbReference type="GlyCosmos" id="A1DN29">
    <property type="glycosylation" value="2 sites, No reported glycans"/>
</dbReference>
<dbReference type="EnsemblFungi" id="EAW16200">
    <property type="protein sequence ID" value="EAW16200"/>
    <property type="gene ID" value="NFIA_055490"/>
</dbReference>
<dbReference type="GeneID" id="4584612"/>
<dbReference type="KEGG" id="nfi:NFIA_055490"/>
<dbReference type="VEuPathDB" id="FungiDB:NFIA_055490"/>
<dbReference type="eggNOG" id="KOG0158">
    <property type="taxonomic scope" value="Eukaryota"/>
</dbReference>
<dbReference type="HOGENOM" id="CLU_001570_14_11_1"/>
<dbReference type="OrthoDB" id="1470350at2759"/>
<dbReference type="UniPathway" id="UPA00213"/>
<dbReference type="Proteomes" id="UP000006702">
    <property type="component" value="Unassembled WGS sequence"/>
</dbReference>
<dbReference type="GO" id="GO:0016020">
    <property type="term" value="C:membrane"/>
    <property type="evidence" value="ECO:0007669"/>
    <property type="project" value="UniProtKB-SubCell"/>
</dbReference>
<dbReference type="GO" id="GO:0020037">
    <property type="term" value="F:heme binding"/>
    <property type="evidence" value="ECO:0007669"/>
    <property type="project" value="InterPro"/>
</dbReference>
<dbReference type="GO" id="GO:0005506">
    <property type="term" value="F:iron ion binding"/>
    <property type="evidence" value="ECO:0007669"/>
    <property type="project" value="InterPro"/>
</dbReference>
<dbReference type="GO" id="GO:0004497">
    <property type="term" value="F:monooxygenase activity"/>
    <property type="evidence" value="ECO:0007669"/>
    <property type="project" value="UniProtKB-KW"/>
</dbReference>
<dbReference type="GO" id="GO:0016705">
    <property type="term" value="F:oxidoreductase activity, acting on paired donors, with incorporation or reduction of molecular oxygen"/>
    <property type="evidence" value="ECO:0007669"/>
    <property type="project" value="InterPro"/>
</dbReference>
<dbReference type="GO" id="GO:0044283">
    <property type="term" value="P:small molecule biosynthetic process"/>
    <property type="evidence" value="ECO:0007669"/>
    <property type="project" value="UniProtKB-ARBA"/>
</dbReference>
<dbReference type="GO" id="GO:0016114">
    <property type="term" value="P:terpenoid biosynthetic process"/>
    <property type="evidence" value="ECO:0007669"/>
    <property type="project" value="UniProtKB-UniPathway"/>
</dbReference>
<dbReference type="CDD" id="cd11058">
    <property type="entry name" value="CYP60B-like"/>
    <property type="match status" value="1"/>
</dbReference>
<dbReference type="Gene3D" id="1.10.630.10">
    <property type="entry name" value="Cytochrome P450"/>
    <property type="match status" value="1"/>
</dbReference>
<dbReference type="InterPro" id="IPR001128">
    <property type="entry name" value="Cyt_P450"/>
</dbReference>
<dbReference type="InterPro" id="IPR017972">
    <property type="entry name" value="Cyt_P450_CS"/>
</dbReference>
<dbReference type="InterPro" id="IPR002401">
    <property type="entry name" value="Cyt_P450_E_grp-I"/>
</dbReference>
<dbReference type="InterPro" id="IPR036396">
    <property type="entry name" value="Cyt_P450_sf"/>
</dbReference>
<dbReference type="InterPro" id="IPR050121">
    <property type="entry name" value="Cytochrome_P450_monoxygenase"/>
</dbReference>
<dbReference type="PANTHER" id="PTHR24305">
    <property type="entry name" value="CYTOCHROME P450"/>
    <property type="match status" value="1"/>
</dbReference>
<dbReference type="PANTHER" id="PTHR24305:SF162">
    <property type="entry name" value="P450, PUTATIVE (EUROFUNG)-RELATED"/>
    <property type="match status" value="1"/>
</dbReference>
<dbReference type="Pfam" id="PF00067">
    <property type="entry name" value="p450"/>
    <property type="match status" value="1"/>
</dbReference>
<dbReference type="PRINTS" id="PR00463">
    <property type="entry name" value="EP450I"/>
</dbReference>
<dbReference type="PRINTS" id="PR00385">
    <property type="entry name" value="P450"/>
</dbReference>
<dbReference type="SUPFAM" id="SSF48264">
    <property type="entry name" value="Cytochrome P450"/>
    <property type="match status" value="1"/>
</dbReference>
<dbReference type="PROSITE" id="PS00086">
    <property type="entry name" value="CYTOCHROME_P450"/>
    <property type="match status" value="1"/>
</dbReference>
<reference key="1">
    <citation type="journal article" date="2008" name="PLoS Genet.">
        <title>Genomic islands in the pathogenic filamentous fungus Aspergillus fumigatus.</title>
        <authorList>
            <person name="Fedorova N.D."/>
            <person name="Khaldi N."/>
            <person name="Joardar V.S."/>
            <person name="Maiti R."/>
            <person name="Amedeo P."/>
            <person name="Anderson M.J."/>
            <person name="Crabtree J."/>
            <person name="Silva J.C."/>
            <person name="Badger J.H."/>
            <person name="Albarraq A."/>
            <person name="Angiuoli S."/>
            <person name="Bussey H."/>
            <person name="Bowyer P."/>
            <person name="Cotty P.J."/>
            <person name="Dyer P.S."/>
            <person name="Egan A."/>
            <person name="Galens K."/>
            <person name="Fraser-Liggett C.M."/>
            <person name="Haas B.J."/>
            <person name="Inman J.M."/>
            <person name="Kent R."/>
            <person name="Lemieux S."/>
            <person name="Malavazi I."/>
            <person name="Orvis J."/>
            <person name="Roemer T."/>
            <person name="Ronning C.M."/>
            <person name="Sundaram J.P."/>
            <person name="Sutton G."/>
            <person name="Turner G."/>
            <person name="Venter J.C."/>
            <person name="White O.R."/>
            <person name="Whitty B.R."/>
            <person name="Youngman P."/>
            <person name="Wolfe K.H."/>
            <person name="Goldman G.H."/>
            <person name="Wortman J.R."/>
            <person name="Jiang B."/>
            <person name="Denning D.W."/>
            <person name="Nierman W.C."/>
        </authorList>
    </citation>
    <scope>NUCLEOTIDE SEQUENCE [LARGE SCALE GENOMIC DNA]</scope>
    <source>
        <strain>ATCC 1020 / DSM 3700 / CBS 544.65 / FGSC A1164 / JCM 1740 / NRRL 181 / WB 181</strain>
    </source>
</reference>
<reference key="2">
    <citation type="journal article" date="2015" name="J. Am. Chem. Soc.">
        <title>Genome mining for sesterterpenes using bifunctional terpene synthases reveals a unified intermediate of di/sesterterpenes.</title>
        <authorList>
            <person name="Ye Y."/>
            <person name="Minami A."/>
            <person name="Mandi A."/>
            <person name="Liu C."/>
            <person name="Taniguchi T."/>
            <person name="Kuzuyama T."/>
            <person name="Monde K."/>
            <person name="Gomi K."/>
            <person name="Oikawa H."/>
        </authorList>
    </citation>
    <scope>FUNCTION</scope>
    <scope>CATALYTIC ACTIVITY</scope>
    <scope>PATHWAY</scope>
</reference>
<reference key="3">
    <citation type="journal article" date="2018" name="Sci. Rep.">
        <title>Theoretical Study of Sesterfisherol Biosynthesis: Computational Prediction of Key Amino Acid Residue in Terpene Synthase.</title>
        <authorList>
            <person name="Sato H."/>
            <person name="Narita K."/>
            <person name="Minami A."/>
            <person name="Yamazaki M."/>
            <person name="Wang C."/>
            <person name="Suemune H."/>
            <person name="Nagano S."/>
            <person name="Tomita T."/>
            <person name="Oikawa H."/>
            <person name="Uchiyama M."/>
        </authorList>
    </citation>
    <scope>FUNCTION</scope>
</reference>
<keyword id="KW-0325">Glycoprotein</keyword>
<keyword id="KW-0349">Heme</keyword>
<keyword id="KW-0408">Iron</keyword>
<keyword id="KW-0472">Membrane</keyword>
<keyword id="KW-0479">Metal-binding</keyword>
<keyword id="KW-0503">Monooxygenase</keyword>
<keyword id="KW-0560">Oxidoreductase</keyword>
<keyword id="KW-1185">Reference proteome</keyword>
<keyword id="KW-0812">Transmembrane</keyword>
<keyword id="KW-1133">Transmembrane helix</keyword>
<sequence length="547" mass="61473">MDAQHLMTMSGISLEQVAIMGCSLGTGLLVSMIIYNYFFHPLARVPGPCTGAIFPFWSMSSLYRRRLNPDLAELHKKYGQILSLLSGYGGLLMCPRNTGPIVRVGPNQLSFATVEAQKMIYNAKPTHTGSDELFGRDGTLQDVLLSMILGAANIGSLSNRAEHKKMRKRLQPGFTSKALFEQESLLRMHMDRLLQGLAQDTGVIDLTEYFSRFLWDLIGDLSFGEPLVPEKHGRRTDTLRSLVGVYQGCFPILEAINYAVPQIEGVLKLALQLVPPATLRAVLPSATFREYDHPAINSHTTPLQCCINRQDGRSDFLTHIMGDKSSNPTELELSYDELHSNATVLMIAGYKTTETSLSALFYRLLSTPGVLEKLQTELFSNFQSIDEITGKKLLSLPYLNGCVNESLRLTPAVAGKFASRRSPGAIIEGFYVPSGTEVYTETYTMQRSPQYWHAPDEYRPERWFERGEGSPYAQDVHEAFKPFSSGPRACLGREMALQTLRLTAALLVYRFHLKIVNEDRFVWEQDTDSRMIYSKYHIKAIVQERLT</sequence>